<name>SELO_ALCBS</name>
<protein>
    <recommendedName>
        <fullName evidence="1">Protein nucleotidyltransferase YdiU</fullName>
        <ecNumber evidence="1">2.7.7.-</ecNumber>
    </recommendedName>
    <alternativeName>
        <fullName evidence="1">Protein adenylyltransferase YdiU</fullName>
        <ecNumber evidence="1">2.7.7.108</ecNumber>
    </alternativeName>
    <alternativeName>
        <fullName evidence="1">Protein uridylyltransferase YdiU</fullName>
        <ecNumber evidence="1">2.7.7.-</ecNumber>
    </alternativeName>
</protein>
<accession>Q0VLS6</accession>
<feature type="chain" id="PRO_0000271802" description="Protein nucleotidyltransferase YdiU">
    <location>
        <begin position="1"/>
        <end position="484"/>
    </location>
</feature>
<feature type="active site" description="Proton acceptor" evidence="1">
    <location>
        <position position="249"/>
    </location>
</feature>
<feature type="binding site" evidence="1">
    <location>
        <position position="87"/>
    </location>
    <ligand>
        <name>ATP</name>
        <dbReference type="ChEBI" id="CHEBI:30616"/>
    </ligand>
</feature>
<feature type="binding site" evidence="1">
    <location>
        <position position="89"/>
    </location>
    <ligand>
        <name>ATP</name>
        <dbReference type="ChEBI" id="CHEBI:30616"/>
    </ligand>
</feature>
<feature type="binding site" evidence="1">
    <location>
        <position position="90"/>
    </location>
    <ligand>
        <name>ATP</name>
        <dbReference type="ChEBI" id="CHEBI:30616"/>
    </ligand>
</feature>
<feature type="binding site" evidence="1">
    <location>
        <position position="110"/>
    </location>
    <ligand>
        <name>ATP</name>
        <dbReference type="ChEBI" id="CHEBI:30616"/>
    </ligand>
</feature>
<feature type="binding site" evidence="1">
    <location>
        <position position="122"/>
    </location>
    <ligand>
        <name>ATP</name>
        <dbReference type="ChEBI" id="CHEBI:30616"/>
    </ligand>
</feature>
<feature type="binding site" evidence="1">
    <location>
        <position position="123"/>
    </location>
    <ligand>
        <name>ATP</name>
        <dbReference type="ChEBI" id="CHEBI:30616"/>
    </ligand>
</feature>
<feature type="binding site" evidence="1">
    <location>
        <position position="173"/>
    </location>
    <ligand>
        <name>ATP</name>
        <dbReference type="ChEBI" id="CHEBI:30616"/>
    </ligand>
</feature>
<feature type="binding site" evidence="1">
    <location>
        <position position="180"/>
    </location>
    <ligand>
        <name>ATP</name>
        <dbReference type="ChEBI" id="CHEBI:30616"/>
    </ligand>
</feature>
<feature type="binding site" evidence="1">
    <location>
        <position position="250"/>
    </location>
    <ligand>
        <name>Mg(2+)</name>
        <dbReference type="ChEBI" id="CHEBI:18420"/>
    </ligand>
</feature>
<feature type="binding site" evidence="1">
    <location>
        <position position="259"/>
    </location>
    <ligand>
        <name>ATP</name>
        <dbReference type="ChEBI" id="CHEBI:30616"/>
    </ligand>
</feature>
<feature type="binding site" evidence="1">
    <location>
        <position position="259"/>
    </location>
    <ligand>
        <name>Mg(2+)</name>
        <dbReference type="ChEBI" id="CHEBI:18420"/>
    </ligand>
</feature>
<sequence>MPSAFGFRFDNTYRRLPEALFSDCLPQPVSTPAFVLFNDNLAQELGLDSEALSEHPEFFSGNELLAGSEPIAQAYAGHQFGSLTMLGDGRAVLLGEQLDGHGQRHDIQLKGAGRTPFSRGGDGRAALGPMLREYIVSEALHALNIATTRSLAVTRTGDRVRRDTLLPGAILTRVAASHIRVGTFQYAAGQQDPVLLEKLVDYTIARHYPALEGAENKALALFEAVMDRQIDLVVDWMRVGFIHGVLNTDNVTLSGESIDFGPCAFMDRFDPNTVFSSIDHQGRYAYGNQPSITQWNLGRFAETLLRMMDDNTDIAIEKATTSLKSFSLRYEEKWRAMMNKKLGLFGSETEDDTLIADLLTWMHAQNADYTNTFRDLIQDGLPDGEQYQSEAFQHWHQRWRARLARNSKPLASSLCLMRNHNPAVIPRNHLVEQALQAASEDNDMTPTHALLQALSAPYADRDSDDRYRQPAAPCEQVHQTFCGT</sequence>
<gene>
    <name evidence="1" type="primary">ydiU</name>
    <name evidence="1" type="synonym">selO</name>
    <name type="ordered locus">ABO_2424</name>
</gene>
<dbReference type="EC" id="2.7.7.-" evidence="1"/>
<dbReference type="EC" id="2.7.7.108" evidence="1"/>
<dbReference type="EMBL" id="AM286690">
    <property type="protein sequence ID" value="CAL17872.1"/>
    <property type="molecule type" value="Genomic_DNA"/>
</dbReference>
<dbReference type="RefSeq" id="WP_011589698.1">
    <property type="nucleotide sequence ID" value="NC_008260.1"/>
</dbReference>
<dbReference type="SMR" id="Q0VLS6"/>
<dbReference type="STRING" id="393595.ABO_2424"/>
<dbReference type="KEGG" id="abo:ABO_2424"/>
<dbReference type="eggNOG" id="COG0397">
    <property type="taxonomic scope" value="Bacteria"/>
</dbReference>
<dbReference type="HOGENOM" id="CLU_010245_4_1_6"/>
<dbReference type="OrthoDB" id="9776281at2"/>
<dbReference type="Proteomes" id="UP000008871">
    <property type="component" value="Chromosome"/>
</dbReference>
<dbReference type="GO" id="GO:0070733">
    <property type="term" value="F:AMPylase activity"/>
    <property type="evidence" value="ECO:0007669"/>
    <property type="project" value="RHEA"/>
</dbReference>
<dbReference type="GO" id="GO:0005524">
    <property type="term" value="F:ATP binding"/>
    <property type="evidence" value="ECO:0007669"/>
    <property type="project" value="UniProtKB-UniRule"/>
</dbReference>
<dbReference type="GO" id="GO:0000287">
    <property type="term" value="F:magnesium ion binding"/>
    <property type="evidence" value="ECO:0007669"/>
    <property type="project" value="UniProtKB-UniRule"/>
</dbReference>
<dbReference type="HAMAP" id="MF_00692">
    <property type="entry name" value="YdiU_SelO"/>
    <property type="match status" value="1"/>
</dbReference>
<dbReference type="InterPro" id="IPR003846">
    <property type="entry name" value="SelO"/>
</dbReference>
<dbReference type="NCBIfam" id="NF000658">
    <property type="entry name" value="PRK00029.1"/>
    <property type="match status" value="1"/>
</dbReference>
<dbReference type="PANTHER" id="PTHR32057">
    <property type="entry name" value="PROTEIN ADENYLYLTRANSFERASE SELO, MITOCHONDRIAL"/>
    <property type="match status" value="1"/>
</dbReference>
<dbReference type="PANTHER" id="PTHR32057:SF14">
    <property type="entry name" value="PROTEIN ADENYLYLTRANSFERASE SELO, MITOCHONDRIAL"/>
    <property type="match status" value="1"/>
</dbReference>
<dbReference type="Pfam" id="PF02696">
    <property type="entry name" value="SelO"/>
    <property type="match status" value="1"/>
</dbReference>
<reference key="1">
    <citation type="journal article" date="2006" name="Nat. Biotechnol.">
        <title>Genome sequence of the ubiquitous hydrocarbon-degrading marine bacterium Alcanivorax borkumensis.</title>
        <authorList>
            <person name="Schneiker S."/>
            <person name="Martins dos Santos V.A.P."/>
            <person name="Bartels D."/>
            <person name="Bekel T."/>
            <person name="Brecht M."/>
            <person name="Buhrmester J."/>
            <person name="Chernikova T.N."/>
            <person name="Denaro R."/>
            <person name="Ferrer M."/>
            <person name="Gertler C."/>
            <person name="Goesmann A."/>
            <person name="Golyshina O.V."/>
            <person name="Kaminski F."/>
            <person name="Khachane A.N."/>
            <person name="Lang S."/>
            <person name="Linke B."/>
            <person name="McHardy A.C."/>
            <person name="Meyer F."/>
            <person name="Nechitaylo T."/>
            <person name="Puehler A."/>
            <person name="Regenhardt D."/>
            <person name="Rupp O."/>
            <person name="Sabirova J.S."/>
            <person name="Selbitschka W."/>
            <person name="Yakimov M.M."/>
            <person name="Timmis K.N."/>
            <person name="Vorhoelter F.-J."/>
            <person name="Weidner S."/>
            <person name="Kaiser O."/>
            <person name="Golyshin P.N."/>
        </authorList>
    </citation>
    <scope>NUCLEOTIDE SEQUENCE [LARGE SCALE GENOMIC DNA]</scope>
    <source>
        <strain>ATCC 700651 / DSM 11573 / NCIMB 13689 / SK2</strain>
    </source>
</reference>
<evidence type="ECO:0000255" key="1">
    <source>
        <dbReference type="HAMAP-Rule" id="MF_00692"/>
    </source>
</evidence>
<proteinExistence type="inferred from homology"/>
<comment type="function">
    <text evidence="1">Nucleotidyltransferase involved in the post-translational modification of proteins. It can catalyze the addition of adenosine monophosphate (AMP) or uridine monophosphate (UMP) to a protein, resulting in modifications known as AMPylation and UMPylation.</text>
</comment>
<comment type="catalytic activity">
    <reaction evidence="1">
        <text>L-seryl-[protein] + ATP = 3-O-(5'-adenylyl)-L-seryl-[protein] + diphosphate</text>
        <dbReference type="Rhea" id="RHEA:58120"/>
        <dbReference type="Rhea" id="RHEA-COMP:9863"/>
        <dbReference type="Rhea" id="RHEA-COMP:15073"/>
        <dbReference type="ChEBI" id="CHEBI:29999"/>
        <dbReference type="ChEBI" id="CHEBI:30616"/>
        <dbReference type="ChEBI" id="CHEBI:33019"/>
        <dbReference type="ChEBI" id="CHEBI:142516"/>
        <dbReference type="EC" id="2.7.7.108"/>
    </reaction>
</comment>
<comment type="catalytic activity">
    <reaction evidence="1">
        <text>L-threonyl-[protein] + ATP = 3-O-(5'-adenylyl)-L-threonyl-[protein] + diphosphate</text>
        <dbReference type="Rhea" id="RHEA:54292"/>
        <dbReference type="Rhea" id="RHEA-COMP:11060"/>
        <dbReference type="Rhea" id="RHEA-COMP:13847"/>
        <dbReference type="ChEBI" id="CHEBI:30013"/>
        <dbReference type="ChEBI" id="CHEBI:30616"/>
        <dbReference type="ChEBI" id="CHEBI:33019"/>
        <dbReference type="ChEBI" id="CHEBI:138113"/>
        <dbReference type="EC" id="2.7.7.108"/>
    </reaction>
</comment>
<comment type="catalytic activity">
    <reaction evidence="1">
        <text>L-tyrosyl-[protein] + ATP = O-(5'-adenylyl)-L-tyrosyl-[protein] + diphosphate</text>
        <dbReference type="Rhea" id="RHEA:54288"/>
        <dbReference type="Rhea" id="RHEA-COMP:10136"/>
        <dbReference type="Rhea" id="RHEA-COMP:13846"/>
        <dbReference type="ChEBI" id="CHEBI:30616"/>
        <dbReference type="ChEBI" id="CHEBI:33019"/>
        <dbReference type="ChEBI" id="CHEBI:46858"/>
        <dbReference type="ChEBI" id="CHEBI:83624"/>
        <dbReference type="EC" id="2.7.7.108"/>
    </reaction>
</comment>
<comment type="catalytic activity">
    <reaction evidence="1">
        <text>L-histidyl-[protein] + UTP = N(tele)-(5'-uridylyl)-L-histidyl-[protein] + diphosphate</text>
        <dbReference type="Rhea" id="RHEA:83891"/>
        <dbReference type="Rhea" id="RHEA-COMP:9745"/>
        <dbReference type="Rhea" id="RHEA-COMP:20239"/>
        <dbReference type="ChEBI" id="CHEBI:29979"/>
        <dbReference type="ChEBI" id="CHEBI:33019"/>
        <dbReference type="ChEBI" id="CHEBI:46398"/>
        <dbReference type="ChEBI" id="CHEBI:233474"/>
    </reaction>
</comment>
<comment type="catalytic activity">
    <reaction evidence="1">
        <text>L-seryl-[protein] + UTP = O-(5'-uridylyl)-L-seryl-[protein] + diphosphate</text>
        <dbReference type="Rhea" id="RHEA:64604"/>
        <dbReference type="Rhea" id="RHEA-COMP:9863"/>
        <dbReference type="Rhea" id="RHEA-COMP:16635"/>
        <dbReference type="ChEBI" id="CHEBI:29999"/>
        <dbReference type="ChEBI" id="CHEBI:33019"/>
        <dbReference type="ChEBI" id="CHEBI:46398"/>
        <dbReference type="ChEBI" id="CHEBI:156051"/>
    </reaction>
</comment>
<comment type="catalytic activity">
    <reaction evidence="1">
        <text>L-tyrosyl-[protein] + UTP = O-(5'-uridylyl)-L-tyrosyl-[protein] + diphosphate</text>
        <dbReference type="Rhea" id="RHEA:83887"/>
        <dbReference type="Rhea" id="RHEA-COMP:10136"/>
        <dbReference type="Rhea" id="RHEA-COMP:20238"/>
        <dbReference type="ChEBI" id="CHEBI:33019"/>
        <dbReference type="ChEBI" id="CHEBI:46398"/>
        <dbReference type="ChEBI" id="CHEBI:46858"/>
        <dbReference type="ChEBI" id="CHEBI:90602"/>
    </reaction>
</comment>
<comment type="cofactor">
    <cofactor evidence="1">
        <name>Mg(2+)</name>
        <dbReference type="ChEBI" id="CHEBI:18420"/>
    </cofactor>
    <cofactor evidence="1">
        <name>Mn(2+)</name>
        <dbReference type="ChEBI" id="CHEBI:29035"/>
    </cofactor>
</comment>
<comment type="similarity">
    <text evidence="1">Belongs to the SELO family.</text>
</comment>
<keyword id="KW-0067">ATP-binding</keyword>
<keyword id="KW-0460">Magnesium</keyword>
<keyword id="KW-0464">Manganese</keyword>
<keyword id="KW-0479">Metal-binding</keyword>
<keyword id="KW-0547">Nucleotide-binding</keyword>
<keyword id="KW-0548">Nucleotidyltransferase</keyword>
<keyword id="KW-1185">Reference proteome</keyword>
<keyword id="KW-0808">Transferase</keyword>
<organism>
    <name type="scientific">Alcanivorax borkumensis (strain ATCC 700651 / DSM 11573 / NCIMB 13689 / SK2)</name>
    <dbReference type="NCBI Taxonomy" id="393595"/>
    <lineage>
        <taxon>Bacteria</taxon>
        <taxon>Pseudomonadati</taxon>
        <taxon>Pseudomonadota</taxon>
        <taxon>Gammaproteobacteria</taxon>
        <taxon>Oceanospirillales</taxon>
        <taxon>Alcanivoracaceae</taxon>
        <taxon>Alcanivorax</taxon>
    </lineage>
</organism>